<comment type="function">
    <text evidence="1">Responsible for the transport of dicarboxylates such as succinate, fumarate, and malate from the periplasm across the membrane.</text>
</comment>
<comment type="subcellular location">
    <subcellularLocation>
        <location evidence="1">Cell inner membrane</location>
        <topology evidence="1">Multi-pass membrane protein</topology>
    </subcellularLocation>
</comment>
<comment type="similarity">
    <text evidence="1">Belongs to the dicarboxylate/amino acid:cation symporter (DAACS) (TC 2.A.23) family.</text>
</comment>
<comment type="sequence caution" evidence="2">
    <conflict type="erroneous initiation">
        <sequence resource="EMBL-CDS" id="ABU79389"/>
    </conflict>
</comment>
<evidence type="ECO:0000255" key="1">
    <source>
        <dbReference type="HAMAP-Rule" id="MF_01300"/>
    </source>
</evidence>
<evidence type="ECO:0000305" key="2"/>
<protein>
    <recommendedName>
        <fullName evidence="1">C4-dicarboxylate transport protein</fullName>
    </recommendedName>
</protein>
<proteinExistence type="inferred from homology"/>
<dbReference type="EMBL" id="CP000783">
    <property type="protein sequence ID" value="ABU79389.1"/>
    <property type="status" value="ALT_INIT"/>
    <property type="molecule type" value="Genomic_DNA"/>
</dbReference>
<dbReference type="RefSeq" id="WP_004387635.1">
    <property type="nucleotide sequence ID" value="NC_009778.1"/>
</dbReference>
<dbReference type="SMR" id="A7MKP4"/>
<dbReference type="KEGG" id="esa:ESA_04209"/>
<dbReference type="HOGENOM" id="CLU_019375_7_0_6"/>
<dbReference type="Proteomes" id="UP000000260">
    <property type="component" value="Chromosome"/>
</dbReference>
<dbReference type="GO" id="GO:0005886">
    <property type="term" value="C:plasma membrane"/>
    <property type="evidence" value="ECO:0007669"/>
    <property type="project" value="UniProtKB-SubCell"/>
</dbReference>
<dbReference type="GO" id="GO:0015138">
    <property type="term" value="F:fumarate transmembrane transporter activity"/>
    <property type="evidence" value="ECO:0007669"/>
    <property type="project" value="TreeGrafter"/>
</dbReference>
<dbReference type="GO" id="GO:0015366">
    <property type="term" value="F:malate:proton symporter activity"/>
    <property type="evidence" value="ECO:0007669"/>
    <property type="project" value="TreeGrafter"/>
</dbReference>
<dbReference type="GO" id="GO:0015141">
    <property type="term" value="F:succinate transmembrane transporter activity"/>
    <property type="evidence" value="ECO:0007669"/>
    <property type="project" value="TreeGrafter"/>
</dbReference>
<dbReference type="GO" id="GO:0070778">
    <property type="term" value="P:L-aspartate transmembrane transport"/>
    <property type="evidence" value="ECO:0007669"/>
    <property type="project" value="TreeGrafter"/>
</dbReference>
<dbReference type="FunFam" id="1.10.3860.10:FF:000001">
    <property type="entry name" value="C4-dicarboxylate transport protein"/>
    <property type="match status" value="1"/>
</dbReference>
<dbReference type="Gene3D" id="1.10.3860.10">
    <property type="entry name" value="Sodium:dicarboxylate symporter"/>
    <property type="match status" value="1"/>
</dbReference>
<dbReference type="HAMAP" id="MF_01300">
    <property type="entry name" value="C4_dicarb_transport"/>
    <property type="match status" value="1"/>
</dbReference>
<dbReference type="InterPro" id="IPR023954">
    <property type="entry name" value="C4_dicarb_transport"/>
</dbReference>
<dbReference type="InterPro" id="IPR001991">
    <property type="entry name" value="Na-dicarboxylate_symporter"/>
</dbReference>
<dbReference type="InterPro" id="IPR018107">
    <property type="entry name" value="Na-dicarboxylate_symporter_CS"/>
</dbReference>
<dbReference type="InterPro" id="IPR036458">
    <property type="entry name" value="Na:dicarbo_symporter_sf"/>
</dbReference>
<dbReference type="NCBIfam" id="NF002461">
    <property type="entry name" value="PRK01663.1"/>
    <property type="match status" value="1"/>
</dbReference>
<dbReference type="NCBIfam" id="NF009587">
    <property type="entry name" value="PRK13027.1"/>
    <property type="match status" value="1"/>
</dbReference>
<dbReference type="PANTHER" id="PTHR42865:SF1">
    <property type="entry name" value="AEROBIC C4-DICARBOXYLATE TRANSPORT PROTEIN"/>
    <property type="match status" value="1"/>
</dbReference>
<dbReference type="PANTHER" id="PTHR42865">
    <property type="entry name" value="PROTON/GLUTAMATE-ASPARTATE SYMPORTER"/>
    <property type="match status" value="1"/>
</dbReference>
<dbReference type="Pfam" id="PF00375">
    <property type="entry name" value="SDF"/>
    <property type="match status" value="1"/>
</dbReference>
<dbReference type="PRINTS" id="PR00173">
    <property type="entry name" value="EDTRNSPORT"/>
</dbReference>
<dbReference type="SUPFAM" id="SSF118215">
    <property type="entry name" value="Proton glutamate symport protein"/>
    <property type="match status" value="1"/>
</dbReference>
<dbReference type="PROSITE" id="PS00713">
    <property type="entry name" value="NA_DICARBOXYL_SYMP_1"/>
    <property type="match status" value="1"/>
</dbReference>
<dbReference type="PROSITE" id="PS00714">
    <property type="entry name" value="NA_DICARBOXYL_SYMP_2"/>
    <property type="match status" value="1"/>
</dbReference>
<feature type="chain" id="PRO_0000321984" description="C4-dicarboxylate transport protein">
    <location>
        <begin position="1"/>
        <end position="428"/>
    </location>
</feature>
<feature type="transmembrane region" description="Helical" evidence="1">
    <location>
        <begin position="8"/>
        <end position="28"/>
    </location>
</feature>
<feature type="transmembrane region" description="Helical" evidence="1">
    <location>
        <begin position="44"/>
        <end position="64"/>
    </location>
</feature>
<feature type="transmembrane region" description="Helical" evidence="1">
    <location>
        <begin position="76"/>
        <end position="96"/>
    </location>
</feature>
<feature type="transmembrane region" description="Helical" evidence="1">
    <location>
        <begin position="142"/>
        <end position="162"/>
    </location>
</feature>
<feature type="transmembrane region" description="Helical" evidence="1">
    <location>
        <begin position="184"/>
        <end position="204"/>
    </location>
</feature>
<feature type="transmembrane region" description="Helical" evidence="1">
    <location>
        <begin position="222"/>
        <end position="242"/>
    </location>
</feature>
<feature type="transmembrane region" description="Helical" evidence="1">
    <location>
        <begin position="289"/>
        <end position="309"/>
    </location>
</feature>
<feature type="transmembrane region" description="Helical" evidence="1">
    <location>
        <begin position="326"/>
        <end position="346"/>
    </location>
</feature>
<feature type="transmembrane region" description="Helical" evidence="1">
    <location>
        <begin position="352"/>
        <end position="372"/>
    </location>
</feature>
<organism>
    <name type="scientific">Cronobacter sakazakii (strain ATCC BAA-894)</name>
    <name type="common">Enterobacter sakazakii</name>
    <dbReference type="NCBI Taxonomy" id="290339"/>
    <lineage>
        <taxon>Bacteria</taxon>
        <taxon>Pseudomonadati</taxon>
        <taxon>Pseudomonadota</taxon>
        <taxon>Gammaproteobacteria</taxon>
        <taxon>Enterobacterales</taxon>
        <taxon>Enterobacteriaceae</taxon>
        <taxon>Cronobacter</taxon>
    </lineage>
</organism>
<name>DCTA_CROS8</name>
<accession>A7MKP4</accession>
<sequence length="428" mass="45573">MKRSLFKSLYFQVLTAIAIGILLGHFYPELGAQMKPLGDAFVKLIKMIIAPVIFCTVVTGIAGMESMKAVGRTGAVALLYFEIVSTIALIIGLVIVNLVQPGAGMNVDPATLDAKAVAVYAEQAQQQGIVAFLMDVIPSSVIGAFASGNILQVLLFAVLFGFALHRLGRNGQLIFNVIESFSQVIFGIINMIMRLAPIGAFGAMAFTIGKYGVGTLVQLGQLIVCFYITCILFVVVVLGSIARATGFNIFKFIRYIREELLIVLGTSSSESALPRMLDKMEKLGCRKSVVGLVIPTGYSFNLDGTSIYLTMAAVFIAQATNSHMDIFHQITLLVVLLLSSKGAAGVTGSGFIVLAATISAVGHLPVAGLALILGIDRFMSEARALTNLVGNGVATIVVAKWVKELDEKQLNDTLNNKNSAAKTQQISS</sequence>
<gene>
    <name evidence="1" type="primary">dctA</name>
    <name type="ordered locus">ESA_04209</name>
</gene>
<reference key="1">
    <citation type="journal article" date="2010" name="PLoS ONE">
        <title>Genome sequence of Cronobacter sakazakii BAA-894 and comparative genomic hybridization analysis with other Cronobacter species.</title>
        <authorList>
            <person name="Kucerova E."/>
            <person name="Clifton S.W."/>
            <person name="Xia X.Q."/>
            <person name="Long F."/>
            <person name="Porwollik S."/>
            <person name="Fulton L."/>
            <person name="Fronick C."/>
            <person name="Minx P."/>
            <person name="Kyung K."/>
            <person name="Warren W."/>
            <person name="Fulton R."/>
            <person name="Feng D."/>
            <person name="Wollam A."/>
            <person name="Shah N."/>
            <person name="Bhonagiri V."/>
            <person name="Nash W.E."/>
            <person name="Hallsworth-Pepin K."/>
            <person name="Wilson R.K."/>
            <person name="McClelland M."/>
            <person name="Forsythe S.J."/>
        </authorList>
    </citation>
    <scope>NUCLEOTIDE SEQUENCE [LARGE SCALE GENOMIC DNA]</scope>
    <source>
        <strain>ATCC BAA-894</strain>
    </source>
</reference>
<keyword id="KW-0997">Cell inner membrane</keyword>
<keyword id="KW-1003">Cell membrane</keyword>
<keyword id="KW-0472">Membrane</keyword>
<keyword id="KW-1185">Reference proteome</keyword>
<keyword id="KW-0769">Symport</keyword>
<keyword id="KW-0812">Transmembrane</keyword>
<keyword id="KW-1133">Transmembrane helix</keyword>
<keyword id="KW-0813">Transport</keyword>